<gene>
    <name evidence="22" type="primary">AZU1</name>
</gene>
<keyword id="KW-0002">3D-structure</keyword>
<keyword id="KW-0044">Antibiotic</keyword>
<keyword id="KW-0929">Antimicrobial</keyword>
<keyword id="KW-0145">Chemotaxis</keyword>
<keyword id="KW-0903">Direct protein sequencing</keyword>
<keyword id="KW-1015">Disulfide bond</keyword>
<keyword id="KW-0325">Glycoprotein</keyword>
<keyword id="KW-0358">Heparin-binding</keyword>
<keyword id="KW-0472">Membrane</keyword>
<keyword id="KW-1267">Proteomics identification</keyword>
<keyword id="KW-1185">Reference proteome</keyword>
<keyword id="KW-0721">Serine protease homolog</keyword>
<keyword id="KW-0732">Signal</keyword>
<keyword id="KW-0865">Zymogen</keyword>
<protein>
    <recommendedName>
        <fullName evidence="20">Azurocidin</fullName>
    </recommendedName>
    <alternativeName>
        <fullName evidence="19">Cationic antimicrobial protein CAP37</fullName>
    </alternativeName>
    <alternativeName>
        <fullName evidence="18">Heparin-binding protein</fullName>
        <shortName evidence="18">HBP</shortName>
        <shortName evidence="18">hHBP</shortName>
    </alternativeName>
</protein>
<name>CAP7_HUMAN</name>
<proteinExistence type="evidence at protein level"/>
<comment type="function">
    <text evidence="3 6 9">This is a neutrophil granule-derived antibacterial and monocyte- and fibroblast-specific chemotactic glycoprotein. Binds heparin. The cytotoxic action is limited to many species of Gram-negative bacteria; this specificity may be explained by a strong affinity of the very basic N-terminal half for the negatively charged lipopolysaccharides that are unique to the Gram-negative bacterial outer envelope. It may play a role in mediating recruitment of monocytes in the second wave of inflammation. Has antibacterial activity against the Gram-negative bacterium P.aeruginosa, this activity is inhibited by LPS from P.aeruginosa. Acting alone, it does not have antimicrobial activity against the Gram-negative bacteria A.actinomycetemcomitans ATCC 29532, A.actinomycetemcomitans NCTC 9709, A.actinomycetemcomitans FDC-Y4, H.aphrophilus ATCC 13252, E.corrodens ATCC 23834, C.sputigena ATCC 33123, Capnocytophaga sp ATCC 33124, Capnocytophaga sp ATCC 27872 or E.coli ML-35. Has antibacterial activity against C.sputigena ATCC 33123 when acting synergistically with either elastase or cathepsin G.</text>
</comment>
<comment type="subcellular location">
    <subcellularLocation>
        <location evidence="9 13">Cytoplasmic granule membrane</location>
        <topology evidence="9">Peripheral membrane protein</topology>
        <orientation evidence="9">Cytoplasmic side</orientation>
    </subcellularLocation>
    <text evidence="9 13">Localizes to azurophil granules of neutrophil granulocytes. Also called primary granules, these specialized lysosomes of the neutrophil formed early during promyelocyte development store antibacterial proteins and peptides.</text>
</comment>
<comment type="PTM">
    <text evidence="2">Cleavage of the N-terminal propeptide which is composed of 7 amino acids occurs in two steps. The initial cleavage of 5 amino acids is followed by the cleavage of a dipeptide to produce the mature form.</text>
</comment>
<comment type="similarity">
    <text evidence="1">Belongs to the peptidase S1 family. Elastase subfamily.</text>
</comment>
<feature type="signal peptide" evidence="2">
    <location>
        <begin position="1"/>
        <end position="19"/>
    </location>
</feature>
<feature type="propeptide" id="PRO_0000435372" description="Removed in mature form" evidence="2 3 4 6 7 8 10 11 12 13">
    <location>
        <begin position="20"/>
        <end position="26"/>
    </location>
</feature>
<feature type="propeptide" id="PRO_0000435373" description="Dipeptide found in non-mature form" evidence="2">
    <location>
        <begin position="25"/>
        <end position="26"/>
    </location>
</feature>
<feature type="chain" id="PRO_0000027705" description="Azurocidin" evidence="7 8">
    <location>
        <begin position="27"/>
        <end position="248"/>
    </location>
</feature>
<feature type="propeptide" id="PRO_0000027706" description="Removed in mature form" evidence="7 8">
    <location>
        <begin position="249"/>
        <end position="251"/>
    </location>
</feature>
<feature type="domain" description="Peptidase S1" evidence="1">
    <location>
        <begin position="27"/>
        <end position="244"/>
    </location>
</feature>
<feature type="region of interest" description="Possesses antibiotic activity" evidence="15">
    <location>
        <begin position="46"/>
        <end position="70"/>
    </location>
</feature>
<feature type="glycosylation site" description="N-linked (GlcNAc...) asparagine; partial" evidence="5 8 14">
    <location>
        <position position="126"/>
    </location>
</feature>
<feature type="glycosylation site" description="N-linked (GlcNAc...) asparagine" evidence="5 8">
    <location>
        <position position="140"/>
    </location>
</feature>
<feature type="glycosylation site" description="N-linked (GlcNAc...) asparagine; partial" evidence="5 8">
    <location>
        <position position="171"/>
    </location>
</feature>
<feature type="disulfide bond" evidence="16 17">
    <location>
        <begin position="52"/>
        <end position="68"/>
    </location>
</feature>
<feature type="disulfide bond" evidence="16 17">
    <location>
        <begin position="149"/>
        <end position="207"/>
    </location>
</feature>
<feature type="disulfide bond" evidence="16 17">
    <location>
        <begin position="180"/>
        <end position="186"/>
    </location>
</feature>
<feature type="disulfide bond" evidence="16 17">
    <location>
        <begin position="197"/>
        <end position="222"/>
    </location>
</feature>
<feature type="mutagenesis site" description="Loss of antibiotic activity." evidence="15">
    <original>C</original>
    <variation>S</variation>
    <location>
        <position position="52"/>
    </location>
</feature>
<feature type="mutagenesis site" description="Loss of antibiotic activity." evidence="15">
    <original>C</original>
    <variation>S</variation>
    <location>
        <position position="68"/>
    </location>
</feature>
<feature type="sequence conflict" description="In Ref. 13; AA sequence." evidence="21" ref="13">
    <original>R</original>
    <variation>H</variation>
    <location>
        <position position="36"/>
    </location>
</feature>
<feature type="sequence conflict" description="In Ref. 7; AA sequence." evidence="21" ref="7">
    <original>S</original>
    <variation>N</variation>
    <location>
        <position position="130"/>
    </location>
</feature>
<feature type="strand" evidence="23">
    <location>
        <begin position="41"/>
        <end position="46"/>
    </location>
</feature>
<feature type="strand" evidence="23">
    <location>
        <begin position="49"/>
        <end position="58"/>
    </location>
</feature>
<feature type="strand" evidence="23">
    <location>
        <begin position="61"/>
        <end position="64"/>
    </location>
</feature>
<feature type="helix" evidence="23">
    <location>
        <begin position="66"/>
        <end position="68"/>
    </location>
</feature>
<feature type="strand" evidence="23">
    <location>
        <begin position="76"/>
        <end position="82"/>
    </location>
</feature>
<feature type="turn" evidence="23">
    <location>
        <begin position="91"/>
        <end position="93"/>
    </location>
</feature>
<feature type="strand" evidence="23">
    <location>
        <begin position="95"/>
        <end position="103"/>
    </location>
</feature>
<feature type="turn" evidence="23">
    <location>
        <begin position="109"/>
        <end position="112"/>
    </location>
</feature>
<feature type="strand" evidence="23">
    <location>
        <begin position="117"/>
        <end position="123"/>
    </location>
</feature>
<feature type="strand" evidence="23">
    <location>
        <begin position="148"/>
        <end position="154"/>
    </location>
</feature>
<feature type="strand" evidence="24">
    <location>
        <begin position="157"/>
        <end position="160"/>
    </location>
</feature>
<feature type="strand" evidence="23">
    <location>
        <begin position="168"/>
        <end position="174"/>
    </location>
</feature>
<feature type="helix" evidence="23">
    <location>
        <begin position="177"/>
        <end position="179"/>
    </location>
</feature>
<feature type="strand" evidence="23">
    <location>
        <begin position="184"/>
        <end position="188"/>
    </location>
</feature>
<feature type="strand" evidence="23">
    <location>
        <begin position="190"/>
        <end position="193"/>
    </location>
</feature>
<feature type="strand" evidence="23">
    <location>
        <begin position="204"/>
        <end position="207"/>
    </location>
</feature>
<feature type="strand" evidence="23">
    <location>
        <begin position="210"/>
        <end position="218"/>
    </location>
</feature>
<feature type="strand" evidence="23">
    <location>
        <begin position="227"/>
        <end position="231"/>
    </location>
</feature>
<feature type="helix" evidence="23">
    <location>
        <begin position="232"/>
        <end position="235"/>
    </location>
</feature>
<feature type="helix" evidence="23">
    <location>
        <begin position="236"/>
        <end position="244"/>
    </location>
</feature>
<evidence type="ECO:0000255" key="1">
    <source>
        <dbReference type="PROSITE-ProRule" id="PRU00274"/>
    </source>
</evidence>
<evidence type="ECO:0000269" key="2">
    <source>
    </source>
</evidence>
<evidence type="ECO:0000269" key="3">
    <source>
    </source>
</evidence>
<evidence type="ECO:0000269" key="4">
    <source>
    </source>
</evidence>
<evidence type="ECO:0000269" key="5">
    <source>
    </source>
</evidence>
<evidence type="ECO:0000269" key="6">
    <source>
    </source>
</evidence>
<evidence type="ECO:0000269" key="7">
    <source>
    </source>
</evidence>
<evidence type="ECO:0000269" key="8">
    <source>
    </source>
</evidence>
<evidence type="ECO:0000269" key="9">
    <source>
    </source>
</evidence>
<evidence type="ECO:0000269" key="10">
    <source>
    </source>
</evidence>
<evidence type="ECO:0000269" key="11">
    <source>
    </source>
</evidence>
<evidence type="ECO:0000269" key="12">
    <source>
    </source>
</evidence>
<evidence type="ECO:0000269" key="13">
    <source>
    </source>
</evidence>
<evidence type="ECO:0000269" key="14">
    <source>
    </source>
</evidence>
<evidence type="ECO:0000269" key="15">
    <source>
    </source>
</evidence>
<evidence type="ECO:0000269" key="16">
    <source>
    </source>
</evidence>
<evidence type="ECO:0000269" key="17">
    <source>
    </source>
</evidence>
<evidence type="ECO:0000303" key="18">
    <source>
    </source>
</evidence>
<evidence type="ECO:0000303" key="19">
    <source>
    </source>
</evidence>
<evidence type="ECO:0000303" key="20">
    <source>
    </source>
</evidence>
<evidence type="ECO:0000305" key="21"/>
<evidence type="ECO:0000312" key="22">
    <source>
        <dbReference type="HGNC" id="HGNC:913"/>
    </source>
</evidence>
<evidence type="ECO:0007829" key="23">
    <source>
        <dbReference type="PDB" id="1A7S"/>
    </source>
</evidence>
<evidence type="ECO:0007829" key="24">
    <source>
        <dbReference type="PDB" id="1FY1"/>
    </source>
</evidence>
<accession>P20160</accession>
<accession>P80014</accession>
<accession>Q52LG4</accession>
<accession>Q9UCM1</accession>
<accession>Q9UCT5</accession>
<organism>
    <name type="scientific">Homo sapiens</name>
    <name type="common">Human</name>
    <dbReference type="NCBI Taxonomy" id="9606"/>
    <lineage>
        <taxon>Eukaryota</taxon>
        <taxon>Metazoa</taxon>
        <taxon>Chordata</taxon>
        <taxon>Craniata</taxon>
        <taxon>Vertebrata</taxon>
        <taxon>Euteleostomi</taxon>
        <taxon>Mammalia</taxon>
        <taxon>Eutheria</taxon>
        <taxon>Euarchontoglires</taxon>
        <taxon>Primates</taxon>
        <taxon>Haplorrhini</taxon>
        <taxon>Catarrhini</taxon>
        <taxon>Hominidae</taxon>
        <taxon>Homo</taxon>
    </lineage>
</organism>
<reference key="1">
    <citation type="journal article" date="1991" name="J. Immunol.">
        <title>Cloning of the cDNA for the serine protease homolog CAP37/azurocidin, a microbicidal and chemotactic protein from human granulocytes.</title>
        <authorList>
            <person name="Morgan J.G."/>
            <person name="Sukiennicki T."/>
            <person name="Pereira H.A."/>
            <person name="Spitznagel J.K."/>
            <person name="Guerra M.E."/>
            <person name="Larrick J.L."/>
        </authorList>
    </citation>
    <scope>NUCLEOTIDE SEQUENCE [MRNA]</scope>
</reference>
<reference key="2">
    <citation type="journal article" date="1992" name="Proc. Natl. Acad. Sci. U.S.A.">
        <title>Three human elastase-like genes coordinately expressed in the myelomonocyte lineage are organized as a single genetic locus on 19pter.</title>
        <authorList>
            <person name="Zimmer M."/>
            <person name="Medcalf R.L."/>
            <person name="Fink T.M."/>
            <person name="Mattmann C."/>
            <person name="Lichter P."/>
            <person name="Jenne D.E."/>
        </authorList>
    </citation>
    <scope>NUCLEOTIDE SEQUENCE [GENOMIC DNA]</scope>
</reference>
<reference key="3">
    <citation type="journal article" date="2004" name="Nature">
        <title>The DNA sequence and biology of human chromosome 19.</title>
        <authorList>
            <person name="Grimwood J."/>
            <person name="Gordon L.A."/>
            <person name="Olsen A.S."/>
            <person name="Terry A."/>
            <person name="Schmutz J."/>
            <person name="Lamerdin J.E."/>
            <person name="Hellsten U."/>
            <person name="Goodstein D."/>
            <person name="Couronne O."/>
            <person name="Tran-Gyamfi M."/>
            <person name="Aerts A."/>
            <person name="Altherr M."/>
            <person name="Ashworth L."/>
            <person name="Bajorek E."/>
            <person name="Black S."/>
            <person name="Branscomb E."/>
            <person name="Caenepeel S."/>
            <person name="Carrano A.V."/>
            <person name="Caoile C."/>
            <person name="Chan Y.M."/>
            <person name="Christensen M."/>
            <person name="Cleland C.A."/>
            <person name="Copeland A."/>
            <person name="Dalin E."/>
            <person name="Dehal P."/>
            <person name="Denys M."/>
            <person name="Detter J.C."/>
            <person name="Escobar J."/>
            <person name="Flowers D."/>
            <person name="Fotopulos D."/>
            <person name="Garcia C."/>
            <person name="Georgescu A.M."/>
            <person name="Glavina T."/>
            <person name="Gomez M."/>
            <person name="Gonzales E."/>
            <person name="Groza M."/>
            <person name="Hammon N."/>
            <person name="Hawkins T."/>
            <person name="Haydu L."/>
            <person name="Ho I."/>
            <person name="Huang W."/>
            <person name="Israni S."/>
            <person name="Jett J."/>
            <person name="Kadner K."/>
            <person name="Kimball H."/>
            <person name="Kobayashi A."/>
            <person name="Larionov V."/>
            <person name="Leem S.-H."/>
            <person name="Lopez F."/>
            <person name="Lou Y."/>
            <person name="Lowry S."/>
            <person name="Malfatti S."/>
            <person name="Martinez D."/>
            <person name="McCready P.M."/>
            <person name="Medina C."/>
            <person name="Morgan J."/>
            <person name="Nelson K."/>
            <person name="Nolan M."/>
            <person name="Ovcharenko I."/>
            <person name="Pitluck S."/>
            <person name="Pollard M."/>
            <person name="Popkie A.P."/>
            <person name="Predki P."/>
            <person name="Quan G."/>
            <person name="Ramirez L."/>
            <person name="Rash S."/>
            <person name="Retterer J."/>
            <person name="Rodriguez A."/>
            <person name="Rogers S."/>
            <person name="Salamov A."/>
            <person name="Salazar A."/>
            <person name="She X."/>
            <person name="Smith D."/>
            <person name="Slezak T."/>
            <person name="Solovyev V."/>
            <person name="Thayer N."/>
            <person name="Tice H."/>
            <person name="Tsai M."/>
            <person name="Ustaszewska A."/>
            <person name="Vo N."/>
            <person name="Wagner M."/>
            <person name="Wheeler J."/>
            <person name="Wu K."/>
            <person name="Xie G."/>
            <person name="Yang J."/>
            <person name="Dubchak I."/>
            <person name="Furey T.S."/>
            <person name="DeJong P."/>
            <person name="Dickson M."/>
            <person name="Gordon D."/>
            <person name="Eichler E.E."/>
            <person name="Pennacchio L.A."/>
            <person name="Richardson P."/>
            <person name="Stubbs L."/>
            <person name="Rokhsar D.S."/>
            <person name="Myers R.M."/>
            <person name="Rubin E.M."/>
            <person name="Lucas S.M."/>
        </authorList>
    </citation>
    <scope>NUCLEOTIDE SEQUENCE [LARGE SCALE GENOMIC DNA]</scope>
</reference>
<reference key="4">
    <citation type="journal article" date="2004" name="Genome Res.">
        <title>The status, quality, and expansion of the NIH full-length cDNA project: the Mammalian Gene Collection (MGC).</title>
        <authorList>
            <consortium name="The MGC Project Team"/>
        </authorList>
    </citation>
    <scope>NUCLEOTIDE SEQUENCE [LARGE SCALE MRNA]</scope>
</reference>
<reference key="5">
    <citation type="journal article" date="1991" name="Biochem. Biophys. Res. Commun.">
        <title>Complementary DNA sequence of human neutrophil azurocidin, an antibiotic with extensive homology to serine proteases.</title>
        <authorList>
            <person name="Almeida R.P."/>
            <person name="Melchior M."/>
            <person name="Campanelli D."/>
            <person name="Nathan C."/>
            <person name="Gabay J.E."/>
        </authorList>
    </citation>
    <scope>NUCLEOTIDE SEQUENCE [MRNA] OF 3-251</scope>
    <source>
        <tissue>Neutrophil</tissue>
    </source>
</reference>
<reference key="6">
    <citation type="journal article" date="1990" name="FEBS Lett.">
        <title>Amino acid sequence of CAP37, a human neutrophil granule-derived antibacterial and monocyte-specific chemotactic glycoprotein structurally similar to neutrophil elastase.</title>
        <authorList>
            <person name="Pohl J."/>
            <person name="Pereira H.A."/>
            <person name="Martin N.M."/>
            <person name="Spitznagel J.K."/>
        </authorList>
    </citation>
    <scope>PROTEIN SEQUENCE OF 27-248</scope>
</reference>
<reference key="7">
    <citation type="journal article" date="1991" name="Eur. J. Biochem.">
        <title>Covalent structure of two novel neutrophile leucocyte-derived proteins of porcine and human origin. Neutrophile elastase homologues with strong monocyte and fibroblast chemotactic activities.</title>
        <authorList>
            <person name="Flodgaard H."/>
            <person name="Oestergaard E."/>
            <person name="Bayne S."/>
            <person name="Svendsen A."/>
            <person name="Thomsen J."/>
            <person name="Engels M."/>
            <person name="Wollmer A."/>
        </authorList>
    </citation>
    <scope>PROTEIN SEQUENCE OF 27-248</scope>
    <source>
        <tissue>Neutrophil</tissue>
    </source>
</reference>
<reference key="8">
    <citation type="journal article" date="1990" name="J. Clin. Invest.">
        <title>CAP37, a human neutrophil-derived chemotactic factor with monocyte specific activity.</title>
        <authorList>
            <person name="Pereira H.A."/>
            <person name="Shafer W.M."/>
            <person name="Pohl J."/>
            <person name="Martin L.E."/>
            <person name="Spitznagel J.K."/>
        </authorList>
    </citation>
    <scope>PROTEIN SEQUENCE OF 27-68</scope>
    <source>
        <tissue>Neutrophil</tissue>
    </source>
</reference>
<reference key="9">
    <citation type="journal article" date="1990" name="Life Sci.">
        <title>CAP 37, a 37 kD human neutrophil granule cationic protein shares homology with inflammatory proteinases.</title>
        <authorList>
            <person name="Pereira H.A."/>
            <person name="Spitznagel J.K."/>
            <person name="Pohl J."/>
            <person name="Wilson D.E."/>
            <person name="Morgan J."/>
            <person name="Palings I."/>
            <person name="Larrick J.W."/>
        </authorList>
    </citation>
    <scope>PROTEIN SEQUENCE OF 27-67</scope>
    <source>
        <tissue>Neutrophil</tissue>
    </source>
</reference>
<reference key="10">
    <citation type="journal article" date="1991" name="Infect. Immun.">
        <title>Comparison of granule proteins from human polymorphonuclear leukocytes which are bactericidal toward Pseudomonas aeruginosa.</title>
        <authorList>
            <person name="Wasiluk K.R."/>
            <person name="Skubitz K.M."/>
            <person name="Gray B.H."/>
        </authorList>
    </citation>
    <scope>PROTEIN SEQUENCE OF 27-48</scope>
    <scope>FUNCTION</scope>
    <source>
        <tissue>Leukocyte</tissue>
    </source>
</reference>
<reference key="11">
    <citation type="journal article" date="1991" name="Arch. Biochem. Biophys.">
        <title>PMN elastases: a comparison of the specificity of human isozymes and the enzyme from other species toward substrates and inhibitors.</title>
        <authorList>
            <person name="Green B.G."/>
            <person name="Weston H."/>
            <person name="Ashe B.M."/>
            <person name="Doherty J."/>
            <person name="Finke P."/>
            <person name="Hagmann W."/>
            <person name="Lark M."/>
            <person name="Mao J."/>
            <person name="Maycock A."/>
            <person name="Moore V."/>
            <person name="Mumford R."/>
            <person name="Shah S."/>
            <person name="Walakovits L."/>
            <person name="Knight W.B."/>
        </authorList>
    </citation>
    <scope>PROTEIN SEQUENCE OF 27-47</scope>
</reference>
<reference key="12">
    <citation type="journal article" date="1989" name="Proc. Natl. Acad. Sci. U.S.A.">
        <title>Antibiotic proteins of human polymorphonuclear leukocytes.</title>
        <authorList>
            <person name="Gabay J.E."/>
            <person name="Scott R.W."/>
            <person name="Campanelli D."/>
            <person name="Griffith J."/>
            <person name="Wilde C."/>
            <person name="Marra M.N."/>
            <person name="Seeger M."/>
            <person name="Nathan C.F."/>
        </authorList>
    </citation>
    <scope>PROTEIN SEQUENCE OF 27-46</scope>
    <scope>SUBCELLULAR LOCATION</scope>
</reference>
<reference key="13">
    <citation type="journal article" date="1990" name="J. Biol. Chem.">
        <title>Characterization of two azurphil granule proteases with active-site homology to neutrophil elastase.</title>
        <authorList>
            <person name="Wilde C.G."/>
            <person name="Snable J.L."/>
            <person name="Griffith J.E."/>
            <person name="Scott R.W."/>
        </authorList>
    </citation>
    <scope>PROTEIN SEQUENCE OF 27-46 AND 194-217</scope>
</reference>
<reference key="14">
    <citation type="journal article" date="1992" name="Infect. Immun.">
        <title>Human neutrophil azurocidin synergizes with leukocyte elastase and cathepsin G in the killing of Capnocytophaga sputigena.</title>
        <authorList>
            <person name="Miyasaki K.T."/>
            <person name="Bodeau A.L."/>
        </authorList>
    </citation>
    <scope>PROTEIN SEQUENCE OF 27-46</scope>
    <scope>FUNCTION</scope>
</reference>
<reference key="15">
    <citation type="journal article" date="2015" name="Biomolecules">
        <title>Complementary LC-MS/MS-Based N-Glycan, N-Glycopeptide, and Intact N-Glycoprotein Profiling Reveals Unconventional Asn71-Glycosylation of Human Neutrophil Cathepsin G.</title>
        <authorList>
            <person name="Loke I."/>
            <person name="Packer N.H."/>
            <person name="Thaysen-Andersen M."/>
        </authorList>
    </citation>
    <scope>PROTEIN SEQUENCE OF 123-131</scope>
    <scope>GLYCOSYLATION AT ASN-126</scope>
</reference>
<reference key="16">
    <citation type="journal article" date="1990" name="J. Clin. Invest.">
        <title>Azurocidin and a homologous serine protease from neutrophils. Differential antimicrobial and proteolytic properties.</title>
        <authorList>
            <person name="Campanelli D."/>
            <person name="Detmers P.A."/>
            <person name="Nathan C.F."/>
            <person name="Gabay J.E."/>
        </authorList>
    </citation>
    <scope>FUNCTION</scope>
    <scope>SUBCELLULAR LOCATION</scope>
    <scope>TOPOLOGY</scope>
</reference>
<reference key="17">
    <citation type="journal article" date="1991" name="Adv. Exp. Med. Biol.">
        <title>Human neutrophil granule cationic protein CAP37 is a specific macrophage chemotaxin that shares homology with inflammatory proteinases.</title>
        <authorList>
            <person name="Morgan J.G."/>
            <person name="Pereira H.A."/>
            <person name="Sukiennicki T."/>
            <person name="Spitznagel J.K."/>
            <person name="Larrick J.W."/>
        </authorList>
    </citation>
    <scope>REVIEW</scope>
</reference>
<reference key="18">
    <citation type="journal article" date="1993" name="Proc. Natl. Acad. Sci. U.S.A.">
        <title>Synthetic bactericidal peptide based on CAP37: a 37-kDa human neutrophil granule-associated cationic antimicrobial protein chemotactic for monocytes.</title>
        <authorList>
            <person name="Pereira H.A."/>
            <person name="Erdem I."/>
            <person name="Pohl J."/>
            <person name="Spitznagel J.K."/>
        </authorList>
    </citation>
    <scope>SYNTHESIS OF 46-70</scope>
    <scope>MUTAGENESIS OF CYS-52 AND CYS-68</scope>
    <scope>REGION</scope>
</reference>
<reference key="19">
    <citation type="journal article" date="1999" name="J. Leukoc. Biol.">
        <title>Characterization of the biosynthesis, processing, and sorting of human HBP/CAP37/azurocidin.</title>
        <authorList>
            <person name="Lindmark A."/>
            <person name="Garwicz D."/>
            <person name="Rasmussen P.B."/>
            <person name="Flodgaard H."/>
            <person name="Gullberg U."/>
        </authorList>
    </citation>
    <scope>PROPEPTIDE CLEAVAGE</scope>
</reference>
<reference key="20">
    <citation type="journal article" date="2009" name="J. Proteome Res.">
        <title>Glycoproteomics analysis of human liver tissue by combination of multiple enzyme digestion and hydrazide chemistry.</title>
        <authorList>
            <person name="Chen R."/>
            <person name="Jiang X."/>
            <person name="Sun D."/>
            <person name="Han G."/>
            <person name="Wang F."/>
            <person name="Ye M."/>
            <person name="Wang L."/>
            <person name="Zou H."/>
        </authorList>
    </citation>
    <scope>GLYCOSYLATION [LARGE SCALE ANALYSIS] AT ASN-126; ASN-140 AND ASN-171</scope>
    <source>
        <tissue>Liver</tissue>
    </source>
</reference>
<reference key="21">
    <citation type="journal article" date="2011" name="BMC Syst. Biol.">
        <title>Initial characterization of the human central proteome.</title>
        <authorList>
            <person name="Burkard T.R."/>
            <person name="Planyavsky M."/>
            <person name="Kaupe I."/>
            <person name="Breitwieser F.P."/>
            <person name="Buerckstuemmer T."/>
            <person name="Bennett K.L."/>
            <person name="Superti-Furga G."/>
            <person name="Colinge J."/>
        </authorList>
    </citation>
    <scope>IDENTIFICATION BY MASS SPECTROMETRY [LARGE SCALE ANALYSIS]</scope>
</reference>
<reference key="22">
    <citation type="journal article" date="2015" name="Proteomics">
        <title>N-terminome analysis of the human mitochondrial proteome.</title>
        <authorList>
            <person name="Vaca Jacome A.S."/>
            <person name="Rabilloud T."/>
            <person name="Schaeffer-Reiss C."/>
            <person name="Rompais M."/>
            <person name="Ayoub D."/>
            <person name="Lane L."/>
            <person name="Bairoch A."/>
            <person name="Van Dorsselaer A."/>
            <person name="Carapito C."/>
        </authorList>
    </citation>
    <scope>IDENTIFICATION BY MASS SPECTROMETRY [LARGE SCALE ANALYSIS]</scope>
</reference>
<reference key="23">
    <citation type="journal article" date="1997" name="Nat. Struct. Biol.">
        <title>Structure of HBP, a multifunctional protein with a serine proteinase fold.</title>
        <authorList>
            <person name="Iversen L.F."/>
            <person name="Kastrup J.S."/>
            <person name="Bjoern S.E."/>
            <person name="Rasmussen P.B."/>
            <person name="Wiberg F.C."/>
            <person name="Flodgaard H.J."/>
            <person name="Larsen I.K."/>
        </authorList>
    </citation>
    <scope>X-RAY CRYSTALLOGRAPHY (2.3 ANGSTROMS)</scope>
    <scope>DISULFIDE BONDS</scope>
</reference>
<reference key="24">
    <citation type="journal article" date="1998" name="Acta Crystallogr. D">
        <title>Atomic resolution structure of human HBP/CAP37/azurocidin.</title>
        <authorList>
            <person name="Karlsen S."/>
            <person name="Iversen L.F."/>
            <person name="Larsen I.K."/>
            <person name="Flodgaard H.J."/>
            <person name="Kastrup J.S."/>
        </authorList>
    </citation>
    <scope>X-RAY CRYSTALLOGRAPHY (1.12 ANGSTROMS)</scope>
    <scope>DISULFIDE BONDS</scope>
</reference>
<dbReference type="EMBL" id="M96326">
    <property type="protein sequence ID" value="AAB59353.1"/>
    <property type="molecule type" value="Genomic_DNA"/>
</dbReference>
<dbReference type="EMBL" id="AC004799">
    <property type="status" value="NOT_ANNOTATED_CDS"/>
    <property type="molecule type" value="Genomic_DNA"/>
</dbReference>
<dbReference type="EMBL" id="BC069495">
    <property type="protein sequence ID" value="AAH69495.1"/>
    <property type="molecule type" value="mRNA"/>
</dbReference>
<dbReference type="EMBL" id="BC093931">
    <property type="protein sequence ID" value="AAH93931.1"/>
    <property type="molecule type" value="mRNA"/>
</dbReference>
<dbReference type="EMBL" id="BC093933">
    <property type="protein sequence ID" value="AAH93933.1"/>
    <property type="molecule type" value="mRNA"/>
</dbReference>
<dbReference type="EMBL" id="X58794">
    <property type="protein sequence ID" value="CAA41601.1"/>
    <property type="molecule type" value="mRNA"/>
</dbReference>
<dbReference type="CCDS" id="CCDS12044.1"/>
<dbReference type="PIR" id="A46268">
    <property type="entry name" value="TRHUAZ"/>
</dbReference>
<dbReference type="RefSeq" id="NP_001691.1">
    <property type="nucleotide sequence ID" value="NM_001700.5"/>
</dbReference>
<dbReference type="PDB" id="1A7S">
    <property type="method" value="X-ray"/>
    <property type="resolution" value="1.12 A"/>
    <property type="chains" value="A=27-251"/>
</dbReference>
<dbReference type="PDB" id="1AE5">
    <property type="method" value="X-ray"/>
    <property type="resolution" value="2.30 A"/>
    <property type="chains" value="A=27-251"/>
</dbReference>
<dbReference type="PDB" id="1FY1">
    <property type="method" value="X-ray"/>
    <property type="resolution" value="2.50 A"/>
    <property type="chains" value="A=27-251"/>
</dbReference>
<dbReference type="PDB" id="1FY3">
    <property type="method" value="X-ray"/>
    <property type="resolution" value="1.89 A"/>
    <property type="chains" value="A=27-251"/>
</dbReference>
<dbReference type="PDBsum" id="1A7S"/>
<dbReference type="PDBsum" id="1AE5"/>
<dbReference type="PDBsum" id="1FY1"/>
<dbReference type="PDBsum" id="1FY3"/>
<dbReference type="BMRB" id="P20160"/>
<dbReference type="SMR" id="P20160"/>
<dbReference type="BioGRID" id="107043">
    <property type="interactions" value="27"/>
</dbReference>
<dbReference type="FunCoup" id="P20160">
    <property type="interactions" value="93"/>
</dbReference>
<dbReference type="IntAct" id="P20160">
    <property type="interactions" value="21"/>
</dbReference>
<dbReference type="MINT" id="P20160"/>
<dbReference type="STRING" id="9606.ENSP00000233997"/>
<dbReference type="MEROPS" id="S01.971"/>
<dbReference type="GlyConnect" id="1023">
    <property type="glycosylation" value="3 N-Linked glycans (1 site)"/>
</dbReference>
<dbReference type="GlyCosmos" id="P20160">
    <property type="glycosylation" value="3 sites, 3 glycans"/>
</dbReference>
<dbReference type="GlyGen" id="P20160">
    <property type="glycosylation" value="4 sites, 27 N-linked glycans (2 sites)"/>
</dbReference>
<dbReference type="iPTMnet" id="P20160"/>
<dbReference type="BioMuta" id="AZU1"/>
<dbReference type="DMDM" id="416746"/>
<dbReference type="jPOST" id="P20160"/>
<dbReference type="MassIVE" id="P20160"/>
<dbReference type="PaxDb" id="9606-ENSP00000233997"/>
<dbReference type="PeptideAtlas" id="P20160"/>
<dbReference type="PRIDE" id="P20160"/>
<dbReference type="ProteomicsDB" id="53732"/>
<dbReference type="Pumba" id="P20160"/>
<dbReference type="Antibodypedia" id="22412">
    <property type="antibodies" value="317 antibodies from 29 providers"/>
</dbReference>
<dbReference type="DNASU" id="566"/>
<dbReference type="Ensembl" id="ENST00000233997.4">
    <property type="protein sequence ID" value="ENSP00000233997.1"/>
    <property type="gene ID" value="ENSG00000172232.10"/>
</dbReference>
<dbReference type="Ensembl" id="ENST00000620695.2">
    <property type="protein sequence ID" value="ENSP00000479183.1"/>
    <property type="gene ID" value="ENSG00000278624.2"/>
</dbReference>
<dbReference type="GeneID" id="566"/>
<dbReference type="KEGG" id="hsa:566"/>
<dbReference type="MANE-Select" id="ENST00000233997.4">
    <property type="protein sequence ID" value="ENSP00000233997.1"/>
    <property type="RefSeq nucleotide sequence ID" value="NM_001700.5"/>
    <property type="RefSeq protein sequence ID" value="NP_001691.1"/>
</dbReference>
<dbReference type="UCSC" id="uc002lpz.2">
    <property type="organism name" value="human"/>
</dbReference>
<dbReference type="AGR" id="HGNC:913"/>
<dbReference type="CTD" id="566"/>
<dbReference type="DisGeNET" id="566"/>
<dbReference type="GeneCards" id="AZU1"/>
<dbReference type="HGNC" id="HGNC:913">
    <property type="gene designation" value="AZU1"/>
</dbReference>
<dbReference type="HPA" id="ENSG00000172232">
    <property type="expression patterns" value="Tissue enriched (bone)"/>
</dbReference>
<dbReference type="MIM" id="162815">
    <property type="type" value="gene"/>
</dbReference>
<dbReference type="neXtProt" id="NX_P20160"/>
<dbReference type="OpenTargets" id="ENSG00000172232"/>
<dbReference type="PharmGKB" id="PA25206"/>
<dbReference type="VEuPathDB" id="HostDB:ENSG00000172232"/>
<dbReference type="eggNOG" id="KOG3627">
    <property type="taxonomic scope" value="Eukaryota"/>
</dbReference>
<dbReference type="GeneTree" id="ENSGT01030000234551"/>
<dbReference type="HOGENOM" id="CLU_006842_1_0_1"/>
<dbReference type="InParanoid" id="P20160"/>
<dbReference type="OMA" id="TAYRSWI"/>
<dbReference type="OrthoDB" id="8440449at2759"/>
<dbReference type="PAN-GO" id="P20160">
    <property type="GO annotations" value="1 GO annotation based on evolutionary models"/>
</dbReference>
<dbReference type="PhylomeDB" id="P20160"/>
<dbReference type="TreeFam" id="TF335284"/>
<dbReference type="PathwayCommons" id="P20160"/>
<dbReference type="Reactome" id="R-HSA-6798695">
    <property type="pathway name" value="Neutrophil degranulation"/>
</dbReference>
<dbReference type="SignaLink" id="P20160"/>
<dbReference type="BioGRID-ORCS" id="566">
    <property type="hits" value="5 hits in 1145 CRISPR screens"/>
</dbReference>
<dbReference type="EvolutionaryTrace" id="P20160"/>
<dbReference type="GeneWiki" id="Azurocidin_1"/>
<dbReference type="GenomeRNAi" id="566"/>
<dbReference type="Pharos" id="P20160">
    <property type="development level" value="Tbio"/>
</dbReference>
<dbReference type="PRO" id="PR:P20160"/>
<dbReference type="Proteomes" id="UP000005640">
    <property type="component" value="Chromosome 19"/>
</dbReference>
<dbReference type="RNAct" id="P20160">
    <property type="molecule type" value="protein"/>
</dbReference>
<dbReference type="Bgee" id="ENSG00000172232">
    <property type="expression patterns" value="Expressed in bone marrow and 87 other cell types or tissues"/>
</dbReference>
<dbReference type="ExpressionAtlas" id="P20160">
    <property type="expression patterns" value="baseline and differential"/>
</dbReference>
<dbReference type="GO" id="GO:0042582">
    <property type="term" value="C:azurophil granule"/>
    <property type="evidence" value="ECO:0000314"/>
    <property type="project" value="UniProtKB"/>
</dbReference>
<dbReference type="GO" id="GO:0035578">
    <property type="term" value="C:azurophil granule lumen"/>
    <property type="evidence" value="ECO:0000304"/>
    <property type="project" value="Reactome"/>
</dbReference>
<dbReference type="GO" id="GO:0035577">
    <property type="term" value="C:azurophil granule membrane"/>
    <property type="evidence" value="ECO:0000314"/>
    <property type="project" value="UniProtKB"/>
</dbReference>
<dbReference type="GO" id="GO:0070062">
    <property type="term" value="C:extracellular exosome"/>
    <property type="evidence" value="ECO:0007005"/>
    <property type="project" value="UniProtKB"/>
</dbReference>
<dbReference type="GO" id="GO:0005576">
    <property type="term" value="C:extracellular region"/>
    <property type="evidence" value="ECO:0000304"/>
    <property type="project" value="Reactome"/>
</dbReference>
<dbReference type="GO" id="GO:0005615">
    <property type="term" value="C:extracellular space"/>
    <property type="evidence" value="ECO:0000314"/>
    <property type="project" value="UniProtKB"/>
</dbReference>
<dbReference type="GO" id="GO:0043231">
    <property type="term" value="C:intracellular membrane-bounded organelle"/>
    <property type="evidence" value="ECO:0000314"/>
    <property type="project" value="HPA"/>
</dbReference>
<dbReference type="GO" id="GO:0016020">
    <property type="term" value="C:membrane"/>
    <property type="evidence" value="ECO:0000314"/>
    <property type="project" value="UniProtKB"/>
</dbReference>
<dbReference type="GO" id="GO:0043395">
    <property type="term" value="F:heparan sulfate proteoglycan binding"/>
    <property type="evidence" value="ECO:0000314"/>
    <property type="project" value="UniProtKB"/>
</dbReference>
<dbReference type="GO" id="GO:0008201">
    <property type="term" value="F:heparin binding"/>
    <property type="evidence" value="ECO:0000315"/>
    <property type="project" value="UniProtKB"/>
</dbReference>
<dbReference type="GO" id="GO:0008233">
    <property type="term" value="F:peptidase activity"/>
    <property type="evidence" value="ECO:0000314"/>
    <property type="project" value="UniProtKB"/>
</dbReference>
<dbReference type="GO" id="GO:0004252">
    <property type="term" value="F:serine-type endopeptidase activity"/>
    <property type="evidence" value="ECO:0000318"/>
    <property type="project" value="GO_Central"/>
</dbReference>
<dbReference type="GO" id="GO:0015643">
    <property type="term" value="F:toxic substance binding"/>
    <property type="evidence" value="ECO:0000303"/>
    <property type="project" value="UniProtKB"/>
</dbReference>
<dbReference type="GO" id="GO:0019730">
    <property type="term" value="P:antimicrobial humoral response"/>
    <property type="evidence" value="ECO:0000315"/>
    <property type="project" value="UniProtKB"/>
</dbReference>
<dbReference type="GO" id="GO:0060326">
    <property type="term" value="P:cell chemotaxis"/>
    <property type="evidence" value="ECO:0000315"/>
    <property type="project" value="UniProtKB"/>
</dbReference>
<dbReference type="GO" id="GO:0045123">
    <property type="term" value="P:cellular extravasation"/>
    <property type="evidence" value="ECO:0000303"/>
    <property type="project" value="UniProtKB"/>
</dbReference>
<dbReference type="GO" id="GO:0050829">
    <property type="term" value="P:defense response to Gram-negative bacterium"/>
    <property type="evidence" value="ECO:0000304"/>
    <property type="project" value="UniProtKB"/>
</dbReference>
<dbReference type="GO" id="GO:0051607">
    <property type="term" value="P:defense response to virus"/>
    <property type="evidence" value="ECO:0000315"/>
    <property type="project" value="UniProtKB"/>
</dbReference>
<dbReference type="GO" id="GO:0008347">
    <property type="term" value="P:glial cell migration"/>
    <property type="evidence" value="ECO:0000314"/>
    <property type="project" value="UniProtKB"/>
</dbReference>
<dbReference type="GO" id="GO:0050930">
    <property type="term" value="P:induction of positive chemotaxis"/>
    <property type="evidence" value="ECO:0000303"/>
    <property type="project" value="UniProtKB"/>
</dbReference>
<dbReference type="GO" id="GO:0006954">
    <property type="term" value="P:inflammatory response"/>
    <property type="evidence" value="ECO:0000303"/>
    <property type="project" value="UniProtKB"/>
</dbReference>
<dbReference type="GO" id="GO:0035556">
    <property type="term" value="P:intracellular signal transduction"/>
    <property type="evidence" value="ECO:0000315"/>
    <property type="project" value="UniProtKB"/>
</dbReference>
<dbReference type="GO" id="GO:0048246">
    <property type="term" value="P:macrophage chemotaxis"/>
    <property type="evidence" value="ECO:0000303"/>
    <property type="project" value="UniProtKB"/>
</dbReference>
<dbReference type="GO" id="GO:0001774">
    <property type="term" value="P:microglial cell activation"/>
    <property type="evidence" value="ECO:0000270"/>
    <property type="project" value="UniProtKB"/>
</dbReference>
<dbReference type="GO" id="GO:0042117">
    <property type="term" value="P:monocyte activation"/>
    <property type="evidence" value="ECO:0000304"/>
    <property type="project" value="UniProtKB"/>
</dbReference>
<dbReference type="GO" id="GO:0035696">
    <property type="term" value="P:monocyte extravasation"/>
    <property type="evidence" value="ECO:0000314"/>
    <property type="project" value="UniProtKB"/>
</dbReference>
<dbReference type="GO" id="GO:0043066">
    <property type="term" value="P:negative regulation of apoptotic process"/>
    <property type="evidence" value="ECO:0000303"/>
    <property type="project" value="UniProtKB"/>
</dbReference>
<dbReference type="GO" id="GO:0070944">
    <property type="term" value="P:neutrophil-mediated killing of bacterium"/>
    <property type="evidence" value="ECO:0000314"/>
    <property type="project" value="UniProtKB"/>
</dbReference>
<dbReference type="GO" id="GO:0007200">
    <property type="term" value="P:phospholipase C-activating G protein-coupled receptor signaling pathway"/>
    <property type="evidence" value="ECO:0000304"/>
    <property type="project" value="UniProtKB"/>
</dbReference>
<dbReference type="GO" id="GO:0045785">
    <property type="term" value="P:positive regulation of cell adhesion"/>
    <property type="evidence" value="ECO:0000314"/>
    <property type="project" value="UniProtKB"/>
</dbReference>
<dbReference type="GO" id="GO:0032724">
    <property type="term" value="P:positive regulation of fractalkine production"/>
    <property type="evidence" value="ECO:0000314"/>
    <property type="project" value="UniProtKB"/>
</dbReference>
<dbReference type="GO" id="GO:0032731">
    <property type="term" value="P:positive regulation of interleukin-1 beta production"/>
    <property type="evidence" value="ECO:0000314"/>
    <property type="project" value="UniProtKB"/>
</dbReference>
<dbReference type="GO" id="GO:0045348">
    <property type="term" value="P:positive regulation of MHC class II biosynthetic process"/>
    <property type="evidence" value="ECO:0000270"/>
    <property type="project" value="UniProtKB"/>
</dbReference>
<dbReference type="GO" id="GO:0050766">
    <property type="term" value="P:positive regulation of phagocytosis"/>
    <property type="evidence" value="ECO:0000314"/>
    <property type="project" value="UniProtKB"/>
</dbReference>
<dbReference type="GO" id="GO:0032760">
    <property type="term" value="P:positive regulation of tumor necrosis factor production"/>
    <property type="evidence" value="ECO:0000314"/>
    <property type="project" value="UniProtKB"/>
</dbReference>
<dbReference type="GO" id="GO:0051604">
    <property type="term" value="P:protein maturation"/>
    <property type="evidence" value="ECO:0000318"/>
    <property type="project" value="GO_Central"/>
</dbReference>
<dbReference type="GO" id="GO:0006508">
    <property type="term" value="P:proteolysis"/>
    <property type="evidence" value="ECO:0000314"/>
    <property type="project" value="UniProtKB"/>
</dbReference>
<dbReference type="GO" id="GO:0043114">
    <property type="term" value="P:regulation of vascular permeability"/>
    <property type="evidence" value="ECO:0000303"/>
    <property type="project" value="UniProtKB"/>
</dbReference>
<dbReference type="CDD" id="cd00190">
    <property type="entry name" value="Tryp_SPc"/>
    <property type="match status" value="1"/>
</dbReference>
<dbReference type="FunFam" id="2.40.10.10:FF:000475">
    <property type="entry name" value="Azurocidin"/>
    <property type="match status" value="1"/>
</dbReference>
<dbReference type="Gene3D" id="2.40.10.10">
    <property type="entry name" value="Trypsin-like serine proteases"/>
    <property type="match status" value="2"/>
</dbReference>
<dbReference type="InterPro" id="IPR009003">
    <property type="entry name" value="Peptidase_S1_PA"/>
</dbReference>
<dbReference type="InterPro" id="IPR043504">
    <property type="entry name" value="Peptidase_S1_PA_chymotrypsin"/>
</dbReference>
<dbReference type="InterPro" id="IPR001314">
    <property type="entry name" value="Peptidase_S1A"/>
</dbReference>
<dbReference type="InterPro" id="IPR001254">
    <property type="entry name" value="Trypsin_dom"/>
</dbReference>
<dbReference type="PANTHER" id="PTHR24271:SF10">
    <property type="entry name" value="AZUROCIDIN"/>
    <property type="match status" value="1"/>
</dbReference>
<dbReference type="PANTHER" id="PTHR24271">
    <property type="entry name" value="KALLIKREIN-RELATED"/>
    <property type="match status" value="1"/>
</dbReference>
<dbReference type="Pfam" id="PF00089">
    <property type="entry name" value="Trypsin"/>
    <property type="match status" value="1"/>
</dbReference>
<dbReference type="PRINTS" id="PR00722">
    <property type="entry name" value="CHYMOTRYPSIN"/>
</dbReference>
<dbReference type="SMART" id="SM00020">
    <property type="entry name" value="Tryp_SPc"/>
    <property type="match status" value="1"/>
</dbReference>
<dbReference type="SUPFAM" id="SSF50494">
    <property type="entry name" value="Trypsin-like serine proteases"/>
    <property type="match status" value="1"/>
</dbReference>
<dbReference type="PROSITE" id="PS50240">
    <property type="entry name" value="TRYPSIN_DOM"/>
    <property type="match status" value="1"/>
</dbReference>
<sequence length="251" mass="26886">MTRLTVLALLAGLLASSRAGSSPLLDIVGGRKARPRQFPFLASIQNQGRHFCGGALIHARFVMTAASCFQSQNPGVSTVVLGAYDLRRRERQSRQTFSISSMSENGYDPQQNLNDLMLLQLDREANLTSSVTILPLPLQNATVEAGTRCQVAGWGSQRSGGRLSRFPRFVNVTVTPEDQCRPNNVCTGVLTRRGGICNGDGGTPLVCEGLAHGVASFSLGPCGRGPDFFTRVALFRDWIDGVLNNPGPGPA</sequence>